<organism>
    <name type="scientific">Arabidopsis thaliana</name>
    <name type="common">Mouse-ear cress</name>
    <dbReference type="NCBI Taxonomy" id="3702"/>
    <lineage>
        <taxon>Eukaryota</taxon>
        <taxon>Viridiplantae</taxon>
        <taxon>Streptophyta</taxon>
        <taxon>Embryophyta</taxon>
        <taxon>Tracheophyta</taxon>
        <taxon>Spermatophyta</taxon>
        <taxon>Magnoliopsida</taxon>
        <taxon>eudicotyledons</taxon>
        <taxon>Gunneridae</taxon>
        <taxon>Pentapetalae</taxon>
        <taxon>rosids</taxon>
        <taxon>malvids</taxon>
        <taxon>Brassicales</taxon>
        <taxon>Brassicaceae</taxon>
        <taxon>Camelineae</taxon>
        <taxon>Arabidopsis</taxon>
    </lineage>
</organism>
<name>PPR53_ARATH</name>
<evidence type="ECO:0000305" key="1"/>
<dbReference type="EMBL" id="AC022472">
    <property type="protein sequence ID" value="AAF79892.1"/>
    <property type="status" value="ALT_SEQ"/>
    <property type="molecule type" value="Genomic_DNA"/>
</dbReference>
<dbReference type="EMBL" id="CP002684">
    <property type="protein sequence ID" value="AEE29953.1"/>
    <property type="molecule type" value="Genomic_DNA"/>
</dbReference>
<dbReference type="PIR" id="A86336">
    <property type="entry name" value="A86336"/>
</dbReference>
<dbReference type="RefSeq" id="NP_173449.1">
    <property type="nucleotide sequence ID" value="NM_101875.2"/>
</dbReference>
<dbReference type="SMR" id="Q9LNU6"/>
<dbReference type="FunCoup" id="Q9LNU6">
    <property type="interactions" value="264"/>
</dbReference>
<dbReference type="STRING" id="3702.Q9LNU6"/>
<dbReference type="PaxDb" id="3702-AT1G20230.1"/>
<dbReference type="ProteomicsDB" id="234836"/>
<dbReference type="EnsemblPlants" id="AT1G20230.1">
    <property type="protein sequence ID" value="AT1G20230.1"/>
    <property type="gene ID" value="AT1G20230"/>
</dbReference>
<dbReference type="GeneID" id="838612"/>
<dbReference type="Gramene" id="AT1G20230.1">
    <property type="protein sequence ID" value="AT1G20230.1"/>
    <property type="gene ID" value="AT1G20230"/>
</dbReference>
<dbReference type="KEGG" id="ath:AT1G20230"/>
<dbReference type="Araport" id="AT1G20230"/>
<dbReference type="TAIR" id="AT1G20230"/>
<dbReference type="eggNOG" id="KOG4197">
    <property type="taxonomic scope" value="Eukaryota"/>
</dbReference>
<dbReference type="HOGENOM" id="CLU_002706_37_8_1"/>
<dbReference type="InParanoid" id="Q9LNU6"/>
<dbReference type="OMA" id="DSCVWGA"/>
<dbReference type="PhylomeDB" id="Q9LNU6"/>
<dbReference type="PRO" id="PR:Q9LNU6"/>
<dbReference type="Proteomes" id="UP000006548">
    <property type="component" value="Chromosome 1"/>
</dbReference>
<dbReference type="ExpressionAtlas" id="Q9LNU6">
    <property type="expression patterns" value="baseline and differential"/>
</dbReference>
<dbReference type="GO" id="GO:0003723">
    <property type="term" value="F:RNA binding"/>
    <property type="evidence" value="ECO:0007669"/>
    <property type="project" value="InterPro"/>
</dbReference>
<dbReference type="GO" id="GO:0008270">
    <property type="term" value="F:zinc ion binding"/>
    <property type="evidence" value="ECO:0007669"/>
    <property type="project" value="InterPro"/>
</dbReference>
<dbReference type="GO" id="GO:0009451">
    <property type="term" value="P:RNA modification"/>
    <property type="evidence" value="ECO:0007669"/>
    <property type="project" value="InterPro"/>
</dbReference>
<dbReference type="FunFam" id="1.25.40.10:FF:000366">
    <property type="entry name" value="Pentatricopeptide (PPR) repeat-containing protein"/>
    <property type="match status" value="1"/>
</dbReference>
<dbReference type="FunFam" id="1.25.40.10:FF:000393">
    <property type="entry name" value="Pentatricopeptide repeat-containing protein At1g20230"/>
    <property type="match status" value="1"/>
</dbReference>
<dbReference type="FunFam" id="1.25.40.10:FF:001794">
    <property type="entry name" value="Pentatricopeptide repeat-containing protein At1g20230"/>
    <property type="match status" value="1"/>
</dbReference>
<dbReference type="FunFam" id="1.25.40.10:FF:000598">
    <property type="entry name" value="pentatricopeptide repeat-containing protein At1g20230 isoform X2"/>
    <property type="match status" value="1"/>
</dbReference>
<dbReference type="FunFam" id="1.25.40.10:FF:000031">
    <property type="entry name" value="Pentatricopeptide repeat-containing protein mitochondrial"/>
    <property type="match status" value="1"/>
</dbReference>
<dbReference type="Gene3D" id="1.25.40.10">
    <property type="entry name" value="Tetratricopeptide repeat domain"/>
    <property type="match status" value="4"/>
</dbReference>
<dbReference type="InterPro" id="IPR032867">
    <property type="entry name" value="DYW_dom"/>
</dbReference>
<dbReference type="InterPro" id="IPR046848">
    <property type="entry name" value="E_motif"/>
</dbReference>
<dbReference type="InterPro" id="IPR046849">
    <property type="entry name" value="Eplus_motif"/>
</dbReference>
<dbReference type="InterPro" id="IPR002885">
    <property type="entry name" value="Pentatricopeptide_rpt"/>
</dbReference>
<dbReference type="InterPro" id="IPR046960">
    <property type="entry name" value="PPR_At4g14850-like_plant"/>
</dbReference>
<dbReference type="InterPro" id="IPR011990">
    <property type="entry name" value="TPR-like_helical_dom_sf"/>
</dbReference>
<dbReference type="NCBIfam" id="TIGR00756">
    <property type="entry name" value="PPR"/>
    <property type="match status" value="9"/>
</dbReference>
<dbReference type="PANTHER" id="PTHR47926">
    <property type="entry name" value="PENTATRICOPEPTIDE REPEAT-CONTAINING PROTEIN"/>
    <property type="match status" value="1"/>
</dbReference>
<dbReference type="PANTHER" id="PTHR47926:SF386">
    <property type="entry name" value="PENTATRICOPEPTIDE REPEAT-CONTAINING PROTEIN"/>
    <property type="match status" value="1"/>
</dbReference>
<dbReference type="Pfam" id="PF14432">
    <property type="entry name" value="DYW_deaminase"/>
    <property type="match status" value="1"/>
</dbReference>
<dbReference type="Pfam" id="PF20431">
    <property type="entry name" value="E_motif"/>
    <property type="match status" value="1"/>
</dbReference>
<dbReference type="Pfam" id="PF20430">
    <property type="entry name" value="Eplus_motif"/>
    <property type="match status" value="1"/>
</dbReference>
<dbReference type="Pfam" id="PF01535">
    <property type="entry name" value="PPR"/>
    <property type="match status" value="4"/>
</dbReference>
<dbReference type="Pfam" id="PF13041">
    <property type="entry name" value="PPR_2"/>
    <property type="match status" value="2"/>
</dbReference>
<dbReference type="Pfam" id="PF13812">
    <property type="entry name" value="PPR_3"/>
    <property type="match status" value="1"/>
</dbReference>
<dbReference type="PROSITE" id="PS51375">
    <property type="entry name" value="PPR"/>
    <property type="match status" value="12"/>
</dbReference>
<gene>
    <name type="primary">PCMP-H21</name>
    <name type="ordered locus">At1g20230</name>
    <name type="ORF">T20H2.1</name>
</gene>
<keyword id="KW-1185">Reference proteome</keyword>
<keyword id="KW-0677">Repeat</keyword>
<protein>
    <recommendedName>
        <fullName>Pentatricopeptide repeat-containing protein At1g20230</fullName>
    </recommendedName>
</protein>
<proteinExistence type="evidence at transcript level"/>
<feature type="chain" id="PRO_0000342794" description="Pentatricopeptide repeat-containing protein At1g20230">
    <location>
        <begin position="1"/>
        <end position="760"/>
    </location>
</feature>
<feature type="repeat" description="PPR 1">
    <location>
        <begin position="49"/>
        <end position="79"/>
    </location>
</feature>
<feature type="repeat" description="PPR 2">
    <location>
        <begin position="80"/>
        <end position="114"/>
    </location>
</feature>
<feature type="repeat" description="PPR 3">
    <location>
        <begin position="115"/>
        <end position="149"/>
    </location>
</feature>
<feature type="repeat" description="PPR 4">
    <location>
        <begin position="150"/>
        <end position="180"/>
    </location>
</feature>
<feature type="repeat" description="PPR 5">
    <location>
        <begin position="181"/>
        <end position="215"/>
    </location>
</feature>
<feature type="repeat" description="PPR 6">
    <location>
        <begin position="216"/>
        <end position="250"/>
    </location>
</feature>
<feature type="repeat" description="PPR 7">
    <location>
        <begin position="251"/>
        <end position="285"/>
    </location>
</feature>
<feature type="repeat" description="PPR 8">
    <location>
        <begin position="286"/>
        <end position="316"/>
    </location>
</feature>
<feature type="repeat" description="PPR 9">
    <location>
        <begin position="317"/>
        <end position="351"/>
    </location>
</feature>
<feature type="repeat" description="PPR 10">
    <location>
        <begin position="352"/>
        <end position="386"/>
    </location>
</feature>
<feature type="repeat" description="PPR 11">
    <location>
        <begin position="387"/>
        <end position="421"/>
    </location>
</feature>
<feature type="repeat" description="PPR 12">
    <location>
        <begin position="422"/>
        <end position="452"/>
    </location>
</feature>
<feature type="repeat" description="PPR 13">
    <location>
        <begin position="453"/>
        <end position="487"/>
    </location>
</feature>
<feature type="repeat" description="PPR 14">
    <location>
        <begin position="488"/>
        <end position="523"/>
    </location>
</feature>
<feature type="repeat" description="PPR 15">
    <location>
        <begin position="524"/>
        <end position="554"/>
    </location>
</feature>
<feature type="region of interest" description="Type E motif">
    <location>
        <begin position="559"/>
        <end position="634"/>
    </location>
</feature>
<feature type="region of interest" description="Type E(+) motif">
    <location>
        <begin position="635"/>
        <end position="665"/>
    </location>
</feature>
<feature type="region of interest" description="Type DYW motif">
    <location>
        <begin position="666"/>
        <end position="760"/>
    </location>
</feature>
<accession>Q9LNU6</accession>
<comment type="similarity">
    <text evidence="1">Belongs to the PPR family. PCMP-H subfamily.</text>
</comment>
<comment type="sequence caution" evidence="1">
    <conflict type="erroneous gene model prediction">
        <sequence resource="EMBL-CDS" id="AAF79892"/>
    </conflict>
</comment>
<comment type="online information" name="Pentatricopeptide repeat proteins">
    <link uri="https://ppr.plantenergy.uwa.edu.au"/>
</comment>
<reference key="1">
    <citation type="journal article" date="2000" name="Nature">
        <title>Sequence and analysis of chromosome 1 of the plant Arabidopsis thaliana.</title>
        <authorList>
            <person name="Theologis A."/>
            <person name="Ecker J.R."/>
            <person name="Palm C.J."/>
            <person name="Federspiel N.A."/>
            <person name="Kaul S."/>
            <person name="White O."/>
            <person name="Alonso J."/>
            <person name="Altafi H."/>
            <person name="Araujo R."/>
            <person name="Bowman C.L."/>
            <person name="Brooks S.Y."/>
            <person name="Buehler E."/>
            <person name="Chan A."/>
            <person name="Chao Q."/>
            <person name="Chen H."/>
            <person name="Cheuk R.F."/>
            <person name="Chin C.W."/>
            <person name="Chung M.K."/>
            <person name="Conn L."/>
            <person name="Conway A.B."/>
            <person name="Conway A.R."/>
            <person name="Creasy T.H."/>
            <person name="Dewar K."/>
            <person name="Dunn P."/>
            <person name="Etgu P."/>
            <person name="Feldblyum T.V."/>
            <person name="Feng J.-D."/>
            <person name="Fong B."/>
            <person name="Fujii C.Y."/>
            <person name="Gill J.E."/>
            <person name="Goldsmith A.D."/>
            <person name="Haas B."/>
            <person name="Hansen N.F."/>
            <person name="Hughes B."/>
            <person name="Huizar L."/>
            <person name="Hunter J.L."/>
            <person name="Jenkins J."/>
            <person name="Johnson-Hopson C."/>
            <person name="Khan S."/>
            <person name="Khaykin E."/>
            <person name="Kim C.J."/>
            <person name="Koo H.L."/>
            <person name="Kremenetskaia I."/>
            <person name="Kurtz D.B."/>
            <person name="Kwan A."/>
            <person name="Lam B."/>
            <person name="Langin-Hooper S."/>
            <person name="Lee A."/>
            <person name="Lee J.M."/>
            <person name="Lenz C.A."/>
            <person name="Li J.H."/>
            <person name="Li Y.-P."/>
            <person name="Lin X."/>
            <person name="Liu S.X."/>
            <person name="Liu Z.A."/>
            <person name="Luros J.S."/>
            <person name="Maiti R."/>
            <person name="Marziali A."/>
            <person name="Militscher J."/>
            <person name="Miranda M."/>
            <person name="Nguyen M."/>
            <person name="Nierman W.C."/>
            <person name="Osborne B.I."/>
            <person name="Pai G."/>
            <person name="Peterson J."/>
            <person name="Pham P.K."/>
            <person name="Rizzo M."/>
            <person name="Rooney T."/>
            <person name="Rowley D."/>
            <person name="Sakano H."/>
            <person name="Salzberg S.L."/>
            <person name="Schwartz J.R."/>
            <person name="Shinn P."/>
            <person name="Southwick A.M."/>
            <person name="Sun H."/>
            <person name="Tallon L.J."/>
            <person name="Tambunga G."/>
            <person name="Toriumi M.J."/>
            <person name="Town C.D."/>
            <person name="Utterback T."/>
            <person name="Van Aken S."/>
            <person name="Vaysberg M."/>
            <person name="Vysotskaia V.S."/>
            <person name="Walker M."/>
            <person name="Wu D."/>
            <person name="Yu G."/>
            <person name="Fraser C.M."/>
            <person name="Venter J.C."/>
            <person name="Davis R.W."/>
        </authorList>
    </citation>
    <scope>NUCLEOTIDE SEQUENCE [LARGE SCALE GENOMIC DNA]</scope>
    <source>
        <strain>cv. Columbia</strain>
    </source>
</reference>
<reference key="2">
    <citation type="journal article" date="2017" name="Plant J.">
        <title>Araport11: a complete reannotation of the Arabidopsis thaliana reference genome.</title>
        <authorList>
            <person name="Cheng C.Y."/>
            <person name="Krishnakumar V."/>
            <person name="Chan A.P."/>
            <person name="Thibaud-Nissen F."/>
            <person name="Schobel S."/>
            <person name="Town C.D."/>
        </authorList>
    </citation>
    <scope>GENOME REANNOTATION</scope>
    <source>
        <strain>cv. Columbia</strain>
    </source>
</reference>
<reference key="3">
    <citation type="journal article" date="2000" name="Plant Mol. Biol.">
        <title>In Arabidopsis thaliana, 1% of the genome codes for a novel protein family unique to plants.</title>
        <authorList>
            <person name="Aubourg S."/>
            <person name="Boudet N."/>
            <person name="Kreis M."/>
            <person name="Lecharny A."/>
        </authorList>
    </citation>
    <scope>GENE FAMILY</scope>
</reference>
<reference key="4">
    <citation type="journal article" date="2004" name="Plant Cell">
        <title>Genome-wide analysis of Arabidopsis pentatricopeptide repeat proteins reveals their essential role in organelle biogenesis.</title>
        <authorList>
            <person name="Lurin C."/>
            <person name="Andres C."/>
            <person name="Aubourg S."/>
            <person name="Bellaoui M."/>
            <person name="Bitton F."/>
            <person name="Bruyere C."/>
            <person name="Caboche M."/>
            <person name="Debast C."/>
            <person name="Gualberto J."/>
            <person name="Hoffmann B."/>
            <person name="Lecharny A."/>
            <person name="Le Ret M."/>
            <person name="Martin-Magniette M.-L."/>
            <person name="Mireau H."/>
            <person name="Peeters N."/>
            <person name="Renou J.-P."/>
            <person name="Szurek B."/>
            <person name="Taconnat L."/>
            <person name="Small I."/>
        </authorList>
    </citation>
    <scope>GENE FAMILY</scope>
</reference>
<sequence>MTKQVLPLIEKIPQSIVGFLESSSYHWSSSLSKTTQAHARILKSGAQNDGYISAKLIASYSNYNCFNDADLVLQSIPDPTIYSFSSLIYALTKAKLFTQSIGVFSRMFSHGLIPDSHVLPNLFKVCAELSAFKVGKQIHCVSCVSGLDMDAFVQGSMFHMYMRCGRMGDARKVFDRMSDKDVVTCSALLCAYARKGCLEEVVRILSEMESSGIEANIVSWNGILSGFNRSGYHKEAVVMFQKIHHLGFCPDQVTVSSVLPSVGDSEMLNMGRLIHGYVIKQGLLKDKCVISAMIDMYGKSGHVYGIISLFNQFEMMEAGVCNAYITGLSRNGLVDKALEMFELFKEQTMELNVVSWTSIIAGCAQNGKDIEALELFREMQVAGVKPNHVTIPSMLPACGNIAALGHGRSTHGFAVRVHLLDNVHVGSALIDMYAKCGRINLSQIVFNMMPTKNLVCWNSLMNGFSMHGKAKEVMSIFESLMRTRLKPDFISFTSLLSACGQVGLTDEGWKYFKMMSEEYGIKPRLEHYSCMVNLLGRAGKLQEAYDLIKEMPFEPDSCVWGALLNSCRLQNNVDLAEIAAEKLFHLEPENPGTYVLLSNIYAAKGMWTEVDSIRNKMESLGLKKNPGCSWIQVKNRVYTLLAGDKSHPQIDQITEKMDEISKEMRKSGHRPNLDFALHDVEEQEQEQMLWGHSEKLAVVFGLLNTPDGTPLQVIKNLRICGDCHAVIKFISSYAGREIFIRDTNRFHHFKDGICSCGDFW</sequence>